<protein>
    <recommendedName>
        <fullName>Pentatricopeptide repeat-containing protein At3g24000, mitochondrial</fullName>
    </recommendedName>
</protein>
<organism>
    <name type="scientific">Arabidopsis thaliana</name>
    <name type="common">Mouse-ear cress</name>
    <dbReference type="NCBI Taxonomy" id="3702"/>
    <lineage>
        <taxon>Eukaryota</taxon>
        <taxon>Viridiplantae</taxon>
        <taxon>Streptophyta</taxon>
        <taxon>Embryophyta</taxon>
        <taxon>Tracheophyta</taxon>
        <taxon>Spermatophyta</taxon>
        <taxon>Magnoliopsida</taxon>
        <taxon>eudicotyledons</taxon>
        <taxon>Gunneridae</taxon>
        <taxon>Pentapetalae</taxon>
        <taxon>rosids</taxon>
        <taxon>malvids</taxon>
        <taxon>Brassicales</taxon>
        <taxon>Brassicaceae</taxon>
        <taxon>Camelineae</taxon>
        <taxon>Arabidopsis</taxon>
    </lineage>
</organism>
<accession>Q9LIQ7</accession>
<accession>F4J5C2</accession>
<evidence type="ECO:0000255" key="1"/>
<evidence type="ECO:0000305" key="2"/>
<sequence length="633" mass="71932">MALRFPPRLLSQLKLSRRLNSLPAPVSEDSEDESLKFPSNDLLLRTSSNDLEGSYIPADRRFYNTLLKKCTVFKLLIQGRIVHAHILQSIFRHDIVMGNTLLNMYAKCGSLEEARKVFEKMPQRDFVTWTTLISGYSQHDRPCDALLFFNQMLRFGYSPNEFTLSSVIKAAAAERRGCCGHQLHGFCVKCGFDSNVHVGSALLDLYTRYGLMDDAQLVFDALESRNDVSWNALIAGHARRSGTEKALELFQGMLRDGFRPSHFSYASLFGACSSTGFLEQGKWVHAYMIKSGEKLVAFAGNTLLDMYAKSGSIHDARKIFDRLAKRDVVSWNSLLTAYAQHGFGKEAVWWFEEMRRVGIRPNEISFLSVLTACSHSGLLDEGWHYYELMKKDGIVPEAWHYVTVVDLLGRAGDLNRALRFIEEMPIEPTAAIWKALLNACRMHKNTELGAYAAEHVFELDPDDPGPHVILYNIYASGGRWNDAARVRKKMKESGVKKEPACSWVEIENAIHMFVANDERHPQREEIARKWEEVLAKIKELGYVPDTSHVIVHVDQQEREVNLQYHSEKIALAFALLNTPPGSTIHIKKNIRVCGDCHTAIKLASKVVGREIIVRDTNRFHHFKDGNCSCKDYW</sequence>
<name>PP252_ARATH</name>
<proteinExistence type="inferred from homology"/>
<keyword id="KW-0496">Mitochondrion</keyword>
<keyword id="KW-1185">Reference proteome</keyword>
<keyword id="KW-0677">Repeat</keyword>
<keyword id="KW-0809">Transit peptide</keyword>
<dbReference type="EMBL" id="AP001297">
    <property type="protein sequence ID" value="BAB03018.1"/>
    <property type="molecule type" value="Genomic_DNA"/>
</dbReference>
<dbReference type="EMBL" id="CP002686">
    <property type="protein sequence ID" value="AEE76843.2"/>
    <property type="molecule type" value="Genomic_DNA"/>
</dbReference>
<dbReference type="RefSeq" id="NP_001319627.1">
    <property type="nucleotide sequence ID" value="NM_001338664.1"/>
</dbReference>
<dbReference type="SMR" id="Q9LIQ7"/>
<dbReference type="FunCoup" id="Q9LIQ7">
    <property type="interactions" value="238"/>
</dbReference>
<dbReference type="STRING" id="3702.Q9LIQ7"/>
<dbReference type="GlyGen" id="Q9LIQ7">
    <property type="glycosylation" value="1 site"/>
</dbReference>
<dbReference type="iPTMnet" id="Q9LIQ7"/>
<dbReference type="PaxDb" id="3702-AT3G24000.1"/>
<dbReference type="ProteomicsDB" id="249188"/>
<dbReference type="EnsemblPlants" id="AT3G24000.1">
    <property type="protein sequence ID" value="AT3G24000.1"/>
    <property type="gene ID" value="AT3G24000"/>
</dbReference>
<dbReference type="GeneID" id="821984"/>
<dbReference type="Gramene" id="AT3G24000.1">
    <property type="protein sequence ID" value="AT3G24000.1"/>
    <property type="gene ID" value="AT3G24000"/>
</dbReference>
<dbReference type="KEGG" id="ath:AT3G24000"/>
<dbReference type="Araport" id="AT3G24000"/>
<dbReference type="TAIR" id="AT3G24000"/>
<dbReference type="eggNOG" id="KOG4197">
    <property type="taxonomic scope" value="Eukaryota"/>
</dbReference>
<dbReference type="HOGENOM" id="CLU_002706_15_1_1"/>
<dbReference type="InParanoid" id="Q9LIQ7"/>
<dbReference type="OMA" id="DTHPRSE"/>
<dbReference type="PhylomeDB" id="Q9LIQ7"/>
<dbReference type="PRO" id="PR:Q9LIQ7"/>
<dbReference type="Proteomes" id="UP000006548">
    <property type="component" value="Chromosome 3"/>
</dbReference>
<dbReference type="ExpressionAtlas" id="Q9LIQ7">
    <property type="expression patterns" value="baseline and differential"/>
</dbReference>
<dbReference type="GO" id="GO:0005739">
    <property type="term" value="C:mitochondrion"/>
    <property type="evidence" value="ECO:0007669"/>
    <property type="project" value="UniProtKB-SubCell"/>
</dbReference>
<dbReference type="GO" id="GO:0003723">
    <property type="term" value="F:RNA binding"/>
    <property type="evidence" value="ECO:0007669"/>
    <property type="project" value="InterPro"/>
</dbReference>
<dbReference type="GO" id="GO:0008270">
    <property type="term" value="F:zinc ion binding"/>
    <property type="evidence" value="ECO:0007669"/>
    <property type="project" value="InterPro"/>
</dbReference>
<dbReference type="GO" id="GO:0009451">
    <property type="term" value="P:RNA modification"/>
    <property type="evidence" value="ECO:0007669"/>
    <property type="project" value="InterPro"/>
</dbReference>
<dbReference type="FunFam" id="1.25.40.10:FF:000343">
    <property type="entry name" value="Pentatricopeptide repeat-containing protein At3g58590"/>
    <property type="match status" value="1"/>
</dbReference>
<dbReference type="FunFam" id="1.25.40.10:FF:000501">
    <property type="entry name" value="Putative pentatricopeptide repeat-containing protein mitochondrial"/>
    <property type="match status" value="1"/>
</dbReference>
<dbReference type="FunFam" id="1.25.40.10:FF:000711">
    <property type="entry name" value="Tetratricopeptide repeat (TPR)-like superfamily protein"/>
    <property type="match status" value="1"/>
</dbReference>
<dbReference type="Gene3D" id="1.25.40.10">
    <property type="entry name" value="Tetratricopeptide repeat domain"/>
    <property type="match status" value="3"/>
</dbReference>
<dbReference type="InterPro" id="IPR032867">
    <property type="entry name" value="DYW_dom"/>
</dbReference>
<dbReference type="InterPro" id="IPR046848">
    <property type="entry name" value="E_motif"/>
</dbReference>
<dbReference type="InterPro" id="IPR002885">
    <property type="entry name" value="Pentatricopeptide_rpt"/>
</dbReference>
<dbReference type="InterPro" id="IPR046960">
    <property type="entry name" value="PPR_At4g14850-like_plant"/>
</dbReference>
<dbReference type="InterPro" id="IPR011990">
    <property type="entry name" value="TPR-like_helical_dom_sf"/>
</dbReference>
<dbReference type="NCBIfam" id="TIGR00756">
    <property type="entry name" value="PPR"/>
    <property type="match status" value="6"/>
</dbReference>
<dbReference type="PANTHER" id="PTHR47926">
    <property type="entry name" value="PENTATRICOPEPTIDE REPEAT-CONTAINING PROTEIN"/>
    <property type="match status" value="1"/>
</dbReference>
<dbReference type="PANTHER" id="PTHR47926:SF502">
    <property type="entry name" value="SELENIUM BINDING PROTEIN"/>
    <property type="match status" value="1"/>
</dbReference>
<dbReference type="Pfam" id="PF14432">
    <property type="entry name" value="DYW_deaminase"/>
    <property type="match status" value="1"/>
</dbReference>
<dbReference type="Pfam" id="PF20431">
    <property type="entry name" value="E_motif"/>
    <property type="match status" value="1"/>
</dbReference>
<dbReference type="Pfam" id="PF01535">
    <property type="entry name" value="PPR"/>
    <property type="match status" value="1"/>
</dbReference>
<dbReference type="Pfam" id="PF13041">
    <property type="entry name" value="PPR_2"/>
    <property type="match status" value="3"/>
</dbReference>
<dbReference type="SUPFAM" id="SSF48452">
    <property type="entry name" value="TPR-like"/>
    <property type="match status" value="1"/>
</dbReference>
<dbReference type="PROSITE" id="PS51375">
    <property type="entry name" value="PPR"/>
    <property type="match status" value="10"/>
</dbReference>
<feature type="transit peptide" description="Mitochondrion" evidence="1">
    <location>
        <begin position="1"/>
        <end position="63"/>
    </location>
</feature>
<feature type="chain" id="PRO_0000356111" description="Pentatricopeptide repeat-containing protein At3g24000, mitochondrial">
    <location>
        <begin position="64"/>
        <end position="633"/>
    </location>
</feature>
<feature type="repeat" description="PPR 1">
    <location>
        <begin position="94"/>
        <end position="124"/>
    </location>
</feature>
<feature type="repeat" description="PPR 2">
    <location>
        <begin position="125"/>
        <end position="159"/>
    </location>
</feature>
<feature type="repeat" description="PPR 3">
    <location>
        <begin position="160"/>
        <end position="194"/>
    </location>
</feature>
<feature type="repeat" description="PPR 4">
    <location>
        <begin position="195"/>
        <end position="225"/>
    </location>
</feature>
<feature type="repeat" description="PPR 5">
    <location>
        <begin position="226"/>
        <end position="260"/>
    </location>
</feature>
<feature type="repeat" description="PPR 6">
    <location>
        <begin position="261"/>
        <end position="295"/>
    </location>
</feature>
<feature type="repeat" description="PPR 7">
    <location>
        <begin position="296"/>
        <end position="326"/>
    </location>
</feature>
<feature type="repeat" description="PPR 8">
    <location>
        <begin position="327"/>
        <end position="361"/>
    </location>
</feature>
<feature type="repeat" description="PPR 9">
    <location>
        <begin position="362"/>
        <end position="396"/>
    </location>
</feature>
<feature type="repeat" description="PPR 10">
    <location>
        <begin position="397"/>
        <end position="431"/>
    </location>
</feature>
<feature type="region of interest" description="Type E motif">
    <location>
        <begin position="432"/>
        <end position="507"/>
    </location>
</feature>
<feature type="region of interest" description="Type E(+) motif">
    <location>
        <begin position="508"/>
        <end position="538"/>
    </location>
</feature>
<feature type="region of interest" description="Type DYW motif">
    <location>
        <begin position="539"/>
        <end position="633"/>
    </location>
</feature>
<reference key="1">
    <citation type="journal article" date="2000" name="DNA Res.">
        <title>Structural analysis of Arabidopsis thaliana chromosome 3. II. Sequence features of the 4,251,695 bp regions covered by 90 P1, TAC and BAC clones.</title>
        <authorList>
            <person name="Kaneko T."/>
            <person name="Katoh T."/>
            <person name="Sato S."/>
            <person name="Nakamura Y."/>
            <person name="Asamizu E."/>
            <person name="Tabata S."/>
        </authorList>
    </citation>
    <scope>NUCLEOTIDE SEQUENCE [LARGE SCALE GENOMIC DNA]</scope>
    <source>
        <strain>cv. Columbia</strain>
    </source>
</reference>
<reference key="2">
    <citation type="journal article" date="2017" name="Plant J.">
        <title>Araport11: a complete reannotation of the Arabidopsis thaliana reference genome.</title>
        <authorList>
            <person name="Cheng C.Y."/>
            <person name="Krishnakumar V."/>
            <person name="Chan A.P."/>
            <person name="Thibaud-Nissen F."/>
            <person name="Schobel S."/>
            <person name="Town C.D."/>
        </authorList>
    </citation>
    <scope>GENOME REANNOTATION</scope>
    <source>
        <strain>cv. Columbia</strain>
    </source>
</reference>
<reference key="3">
    <citation type="journal article" date="2004" name="Plant Cell">
        <title>Genome-wide analysis of Arabidopsis pentatricopeptide repeat proteins reveals their essential role in organelle biogenesis.</title>
        <authorList>
            <person name="Lurin C."/>
            <person name="Andres C."/>
            <person name="Aubourg S."/>
            <person name="Bellaoui M."/>
            <person name="Bitton F."/>
            <person name="Bruyere C."/>
            <person name="Caboche M."/>
            <person name="Debast C."/>
            <person name="Gualberto J."/>
            <person name="Hoffmann B."/>
            <person name="Lecharny A."/>
            <person name="Le Ret M."/>
            <person name="Martin-Magniette M.-L."/>
            <person name="Mireau H."/>
            <person name="Peeters N."/>
            <person name="Renou J.-P."/>
            <person name="Szurek B."/>
            <person name="Taconnat L."/>
            <person name="Small I."/>
        </authorList>
    </citation>
    <scope>GENE FAMILY</scope>
</reference>
<comment type="subcellular location">
    <subcellularLocation>
        <location evidence="2">Mitochondrion</location>
    </subcellularLocation>
</comment>
<comment type="similarity">
    <text evidence="2">Belongs to the PPR family. PCMP-H subfamily.</text>
</comment>
<comment type="online information" name="Pentatricopeptide repeat proteins">
    <link uri="https://ppr.plantenergy.uwa.edu.au"/>
</comment>
<gene>
    <name type="primary">PCMP-H87</name>
    <name type="ordered locus">At3g24000</name>
    <name type="ORF">F14O13.19</name>
</gene>